<accession>O29947</accession>
<dbReference type="EMBL" id="AE000782">
    <property type="protein sequence ID" value="AAB90939.1"/>
    <property type="molecule type" value="Genomic_DNA"/>
</dbReference>
<dbReference type="PIR" id="G69286">
    <property type="entry name" value="G69286"/>
</dbReference>
<dbReference type="RefSeq" id="WP_010877805.1">
    <property type="nucleotide sequence ID" value="NC_000917.1"/>
</dbReference>
<dbReference type="SMR" id="O29947"/>
<dbReference type="PaxDb" id="224325-AF_0295"/>
<dbReference type="EnsemblBacteria" id="AAB90939">
    <property type="protein sequence ID" value="AAB90939"/>
    <property type="gene ID" value="AF_0295"/>
</dbReference>
<dbReference type="KEGG" id="afu:AF_0295"/>
<dbReference type="HOGENOM" id="CLU_2678652_0_0_2"/>
<dbReference type="Proteomes" id="UP000002199">
    <property type="component" value="Chromosome"/>
</dbReference>
<reference key="1">
    <citation type="journal article" date="1997" name="Nature">
        <title>The complete genome sequence of the hyperthermophilic, sulphate-reducing archaeon Archaeoglobus fulgidus.</title>
        <authorList>
            <person name="Klenk H.-P."/>
            <person name="Clayton R.A."/>
            <person name="Tomb J.-F."/>
            <person name="White O."/>
            <person name="Nelson K.E."/>
            <person name="Ketchum K.A."/>
            <person name="Dodson R.J."/>
            <person name="Gwinn M.L."/>
            <person name="Hickey E.K."/>
            <person name="Peterson J.D."/>
            <person name="Richardson D.L."/>
            <person name="Kerlavage A.R."/>
            <person name="Graham D.E."/>
            <person name="Kyrpides N.C."/>
            <person name="Fleischmann R.D."/>
            <person name="Quackenbush J."/>
            <person name="Lee N.H."/>
            <person name="Sutton G.G."/>
            <person name="Gill S.R."/>
            <person name="Kirkness E.F."/>
            <person name="Dougherty B.A."/>
            <person name="McKenney K."/>
            <person name="Adams M.D."/>
            <person name="Loftus B.J."/>
            <person name="Peterson S.N."/>
            <person name="Reich C.I."/>
            <person name="McNeil L.K."/>
            <person name="Badger J.H."/>
            <person name="Glodek A."/>
            <person name="Zhou L."/>
            <person name="Overbeek R."/>
            <person name="Gocayne J.D."/>
            <person name="Weidman J.F."/>
            <person name="McDonald L.A."/>
            <person name="Utterback T.R."/>
            <person name="Cotton M.D."/>
            <person name="Spriggs T."/>
            <person name="Artiach P."/>
            <person name="Kaine B.P."/>
            <person name="Sykes S.M."/>
            <person name="Sadow P.W."/>
            <person name="D'Andrea K.P."/>
            <person name="Bowman C."/>
            <person name="Fujii C."/>
            <person name="Garland S.A."/>
            <person name="Mason T.M."/>
            <person name="Olsen G.J."/>
            <person name="Fraser C.M."/>
            <person name="Smith H.O."/>
            <person name="Woese C.R."/>
            <person name="Venter J.C."/>
        </authorList>
    </citation>
    <scope>NUCLEOTIDE SEQUENCE [LARGE SCALE GENOMIC DNA]</scope>
    <source>
        <strain>ATCC 49558 / DSM 4304 / JCM 9628 / NBRC 100126 / VC-16</strain>
    </source>
</reference>
<sequence length="74" mass="8839">MEVQVLEAGKIISPNEKVIVWRIGDYFLIKKIEGKKTLERIGEIRKKLEDRDMLLSEEEVVKTVKEVREEWKRL</sequence>
<keyword id="KW-1185">Reference proteome</keyword>
<organism>
    <name type="scientific">Archaeoglobus fulgidus (strain ATCC 49558 / DSM 4304 / JCM 9628 / NBRC 100126 / VC-16)</name>
    <dbReference type="NCBI Taxonomy" id="224325"/>
    <lineage>
        <taxon>Archaea</taxon>
        <taxon>Methanobacteriati</taxon>
        <taxon>Methanobacteriota</taxon>
        <taxon>Archaeoglobi</taxon>
        <taxon>Archaeoglobales</taxon>
        <taxon>Archaeoglobaceae</taxon>
        <taxon>Archaeoglobus</taxon>
    </lineage>
</organism>
<feature type="chain" id="PRO_0000127861" description="Uncharacterized protein AF_0295">
    <location>
        <begin position="1"/>
        <end position="74"/>
    </location>
</feature>
<gene>
    <name type="ordered locus">AF_0295</name>
</gene>
<protein>
    <recommendedName>
        <fullName>Uncharacterized protein AF_0295</fullName>
    </recommendedName>
</protein>
<name>Y295_ARCFU</name>
<proteinExistence type="predicted"/>